<proteinExistence type="evidence at transcript level"/>
<accession>A5PLI4</accession>
<evidence type="ECO:0000250" key="1"/>
<feature type="chain" id="PRO_0000315711" description="LRP2-binding protein">
    <location>
        <begin position="1"/>
        <end position="343"/>
    </location>
</feature>
<feature type="repeat" description="TPR">
    <location>
        <begin position="58"/>
        <end position="91"/>
    </location>
</feature>
<feature type="repeat" description="Sel1-like 1">
    <location>
        <begin position="92"/>
        <end position="124"/>
    </location>
</feature>
<feature type="repeat" description="Sel1-like 2">
    <location>
        <begin position="132"/>
        <end position="167"/>
    </location>
</feature>
<feature type="repeat" description="Sel1-like 3">
    <location>
        <begin position="172"/>
        <end position="205"/>
    </location>
</feature>
<feature type="repeat" description="Sel1-like 4">
    <location>
        <begin position="206"/>
        <end position="241"/>
    </location>
</feature>
<feature type="repeat" description="Sel1-like 5">
    <location>
        <begin position="242"/>
        <end position="273"/>
    </location>
</feature>
<feature type="repeat" description="Sel1-like 6">
    <location>
        <begin position="293"/>
        <end position="328"/>
    </location>
</feature>
<keyword id="KW-0963">Cytoplasm</keyword>
<keyword id="KW-1185">Reference proteome</keyword>
<keyword id="KW-0677">Repeat</keyword>
<keyword id="KW-0802">TPR repeat</keyword>
<comment type="function">
    <text evidence="1">May act as an adapter that regulates LRP2 function.</text>
</comment>
<comment type="subcellular location">
    <subcellularLocation>
        <location evidence="1">Cytoplasm</location>
    </subcellularLocation>
</comment>
<name>LR2BP_DANRE</name>
<reference key="1">
    <citation type="submission" date="2007-06" db="EMBL/GenBank/DDBJ databases">
        <authorList>
            <consortium name="NIH - Zebrafish Gene Collection (ZGC) project"/>
        </authorList>
    </citation>
    <scope>NUCLEOTIDE SEQUENCE [LARGE SCALE MRNA]</scope>
    <source>
        <tissue>Olfactory epithelium</tissue>
    </source>
</reference>
<gene>
    <name type="primary">lrp2bp</name>
    <name type="ORF">zgc:165631</name>
</gene>
<dbReference type="EMBL" id="BC142915">
    <property type="protein sequence ID" value="AAI42916.1"/>
    <property type="molecule type" value="mRNA"/>
</dbReference>
<dbReference type="RefSeq" id="NP_001092246.1">
    <property type="nucleotide sequence ID" value="NM_001098776.1"/>
</dbReference>
<dbReference type="SMR" id="A5PLI4"/>
<dbReference type="FunCoup" id="A5PLI4">
    <property type="interactions" value="13"/>
</dbReference>
<dbReference type="STRING" id="7955.ENSDARP00000134329"/>
<dbReference type="PaxDb" id="7955-ENSDARP00000059242"/>
<dbReference type="PeptideAtlas" id="A5PLI4"/>
<dbReference type="GeneID" id="100073340"/>
<dbReference type="KEGG" id="dre:100073340"/>
<dbReference type="AGR" id="ZFIN:ZDB-GENE-070615-41"/>
<dbReference type="CTD" id="55805"/>
<dbReference type="ZFIN" id="ZDB-GENE-070615-41">
    <property type="gene designation" value="lrp2bp"/>
</dbReference>
<dbReference type="eggNOG" id="KOG1550">
    <property type="taxonomic scope" value="Eukaryota"/>
</dbReference>
<dbReference type="InParanoid" id="A5PLI4"/>
<dbReference type="OrthoDB" id="2384430at2759"/>
<dbReference type="PhylomeDB" id="A5PLI4"/>
<dbReference type="PRO" id="PR:A5PLI4"/>
<dbReference type="Proteomes" id="UP000000437">
    <property type="component" value="Chromosome 14"/>
</dbReference>
<dbReference type="GO" id="GO:0005737">
    <property type="term" value="C:cytoplasm"/>
    <property type="evidence" value="ECO:0007669"/>
    <property type="project" value="UniProtKB-SubCell"/>
</dbReference>
<dbReference type="Gene3D" id="1.25.40.10">
    <property type="entry name" value="Tetratricopeptide repeat domain"/>
    <property type="match status" value="1"/>
</dbReference>
<dbReference type="InterPro" id="IPR052323">
    <property type="entry name" value="LRP2-binding"/>
</dbReference>
<dbReference type="InterPro" id="IPR006597">
    <property type="entry name" value="Sel1-like"/>
</dbReference>
<dbReference type="InterPro" id="IPR011990">
    <property type="entry name" value="TPR-like_helical_dom_sf"/>
</dbReference>
<dbReference type="PANTHER" id="PTHR44554">
    <property type="entry name" value="LRP2-BINDING PROTEIN"/>
    <property type="match status" value="1"/>
</dbReference>
<dbReference type="PANTHER" id="PTHR44554:SF1">
    <property type="entry name" value="LRP2-BINDING PROTEIN"/>
    <property type="match status" value="1"/>
</dbReference>
<dbReference type="Pfam" id="PF08238">
    <property type="entry name" value="Sel1"/>
    <property type="match status" value="5"/>
</dbReference>
<dbReference type="SMART" id="SM00671">
    <property type="entry name" value="SEL1"/>
    <property type="match status" value="5"/>
</dbReference>
<dbReference type="SUPFAM" id="SSF81901">
    <property type="entry name" value="HCP-like"/>
    <property type="match status" value="1"/>
</dbReference>
<organism>
    <name type="scientific">Danio rerio</name>
    <name type="common">Zebrafish</name>
    <name type="synonym">Brachydanio rerio</name>
    <dbReference type="NCBI Taxonomy" id="7955"/>
    <lineage>
        <taxon>Eukaryota</taxon>
        <taxon>Metazoa</taxon>
        <taxon>Chordata</taxon>
        <taxon>Craniata</taxon>
        <taxon>Vertebrata</taxon>
        <taxon>Euteleostomi</taxon>
        <taxon>Actinopterygii</taxon>
        <taxon>Neopterygii</taxon>
        <taxon>Teleostei</taxon>
        <taxon>Ostariophysi</taxon>
        <taxon>Cypriniformes</taxon>
        <taxon>Danionidae</taxon>
        <taxon>Danioninae</taxon>
        <taxon>Danio</taxon>
    </lineage>
</organism>
<sequence>MDCSELDSTEKSKPSQLLRAINQIYEEGREESTHSETNAASVEKTMNLLKEKAETGDSQATFLLGQLHYVQGCYAEAELIFDRIKDKDPQALYQLAVIYYDGLGTKEDLGRAVEYMGRVAFWDSSEAGSVRYAALYNLGQAYLEGFGVQASSSEAERLWLLAADNGNPNASVKAQSALGMFYSRPESLDLRKAFFWHSQACGNGSLESQAALGLMYLYGHGVQRDSDSALFCLKEAAERGSVYAQGHLTACYYRRQLYSRAAALGQRVCEYKDTAAIAQQTDCLEEYVRKGIAIGMFYYARCLHLGRGVPQNRDKAKHYCTQAVRIDPLICKELQIDAAHGKI</sequence>
<protein>
    <recommendedName>
        <fullName>LRP2-binding protein</fullName>
    </recommendedName>
</protein>